<comment type="catalytic activity">
    <reaction evidence="1">
        <text>alpha-D-xylose = alpha-D-xylulofuranose</text>
        <dbReference type="Rhea" id="RHEA:22816"/>
        <dbReference type="ChEBI" id="CHEBI:28518"/>
        <dbReference type="ChEBI" id="CHEBI:188998"/>
        <dbReference type="EC" id="5.3.1.5"/>
    </reaction>
</comment>
<comment type="cofactor">
    <cofactor evidence="1">
        <name>Mg(2+)</name>
        <dbReference type="ChEBI" id="CHEBI:18420"/>
    </cofactor>
    <text evidence="1">Binds 2 magnesium ions per subunit.</text>
</comment>
<comment type="subunit">
    <text evidence="1">Homotetramer.</text>
</comment>
<comment type="subcellular location">
    <subcellularLocation>
        <location evidence="1">Cytoplasm</location>
    </subcellularLocation>
</comment>
<comment type="similarity">
    <text evidence="1">Belongs to the xylose isomerase family.</text>
</comment>
<comment type="sequence caution" evidence="2">
    <conflict type="erroneous initiation">
        <sequence resource="EMBL-CDS" id="AAW77671"/>
    </conflict>
</comment>
<organism>
    <name type="scientific">Xanthomonas oryzae pv. oryzae (strain KACC10331 / KXO85)</name>
    <dbReference type="NCBI Taxonomy" id="291331"/>
    <lineage>
        <taxon>Bacteria</taxon>
        <taxon>Pseudomonadati</taxon>
        <taxon>Pseudomonadota</taxon>
        <taxon>Gammaproteobacteria</taxon>
        <taxon>Lysobacterales</taxon>
        <taxon>Lysobacteraceae</taxon>
        <taxon>Xanthomonas</taxon>
    </lineage>
</organism>
<reference key="1">
    <citation type="journal article" date="2005" name="Nucleic Acids Res.">
        <title>The genome sequence of Xanthomonas oryzae pathovar oryzae KACC10331, the bacterial blight pathogen of rice.</title>
        <authorList>
            <person name="Lee B.-M."/>
            <person name="Park Y.-J."/>
            <person name="Park D.-S."/>
            <person name="Kang H.-W."/>
            <person name="Kim J.-G."/>
            <person name="Song E.-S."/>
            <person name="Park I.-C."/>
            <person name="Yoon U.-H."/>
            <person name="Hahn J.-H."/>
            <person name="Koo B.-S."/>
            <person name="Lee G.-B."/>
            <person name="Kim H."/>
            <person name="Park H.-S."/>
            <person name="Yoon K.-O."/>
            <person name="Kim J.-H."/>
            <person name="Jung C.-H."/>
            <person name="Koh N.-H."/>
            <person name="Seo J.-S."/>
            <person name="Go S.-J."/>
        </authorList>
    </citation>
    <scope>NUCLEOTIDE SEQUENCE [LARGE SCALE GENOMIC DNA]</scope>
    <source>
        <strain>KACC10331 / KXO85</strain>
    </source>
</reference>
<feature type="chain" id="PRO_0000236979" description="Xylose isomerase 2">
    <location>
        <begin position="1"/>
        <end position="445"/>
    </location>
</feature>
<feature type="active site" evidence="1">
    <location>
        <position position="109"/>
    </location>
</feature>
<feature type="active site" evidence="1">
    <location>
        <position position="112"/>
    </location>
</feature>
<feature type="binding site" evidence="1">
    <location>
        <position position="240"/>
    </location>
    <ligand>
        <name>Mg(2+)</name>
        <dbReference type="ChEBI" id="CHEBI:18420"/>
        <label>1</label>
    </ligand>
</feature>
<feature type="binding site" evidence="1">
    <location>
        <position position="276"/>
    </location>
    <ligand>
        <name>Mg(2+)</name>
        <dbReference type="ChEBI" id="CHEBI:18420"/>
        <label>1</label>
    </ligand>
</feature>
<feature type="binding site" evidence="1">
    <location>
        <position position="276"/>
    </location>
    <ligand>
        <name>Mg(2+)</name>
        <dbReference type="ChEBI" id="CHEBI:18420"/>
        <label>2</label>
    </ligand>
</feature>
<feature type="binding site" evidence="1">
    <location>
        <position position="279"/>
    </location>
    <ligand>
        <name>Mg(2+)</name>
        <dbReference type="ChEBI" id="CHEBI:18420"/>
        <label>2</label>
    </ligand>
</feature>
<feature type="binding site" evidence="1">
    <location>
        <position position="304"/>
    </location>
    <ligand>
        <name>Mg(2+)</name>
        <dbReference type="ChEBI" id="CHEBI:18420"/>
        <label>1</label>
    </ligand>
</feature>
<feature type="binding site" evidence="1">
    <location>
        <position position="315"/>
    </location>
    <ligand>
        <name>Mg(2+)</name>
        <dbReference type="ChEBI" id="CHEBI:18420"/>
        <label>2</label>
    </ligand>
</feature>
<feature type="binding site" evidence="1">
    <location>
        <position position="317"/>
    </location>
    <ligand>
        <name>Mg(2+)</name>
        <dbReference type="ChEBI" id="CHEBI:18420"/>
        <label>2</label>
    </ligand>
</feature>
<feature type="binding site" evidence="1">
    <location>
        <position position="347"/>
    </location>
    <ligand>
        <name>Mg(2+)</name>
        <dbReference type="ChEBI" id="CHEBI:18420"/>
        <label>1</label>
    </ligand>
</feature>
<name>XYLA2_XANOR</name>
<sequence>MSNTVYIGAKEYFPGIGKIGFEGRESDNPLAFKVYDANKTIGDKTMAEHLRFAVAYWHSFCGNGADPFGPGTRAYPWDVGNSALARAEAKSDAAFEFFTKLGVPYYCFHDIDLSPDADDIGEYESNLKHMVGVAKQRQADTGIKLLWGTANLFSHPRYMNGASTNPDFNVVARAAVQVKAAIDATVELGGENYVFWGGREGYACLHNTQMKREQDNMARFLTLARDYGRSIGFTGNFLIEPKPMEPMKHQYDFDSATVIGFLRQHGLDQDFKLNIEANHATLSGHSFEHDLQVASDAGLLGSIDANRGNPQNGWDTDQFPTDLYDTVGAMLVVLRQGGLAPGGLNFDAKVRRESSDPQDLFLAHIGGMDAFARGLEVANALLTSSPLEQWRAERYASFDNGTGADFAAGKITLADLAAHAAGNAPKQISGRQEAYENLINQYLTR</sequence>
<gene>
    <name evidence="1" type="primary">xylA2</name>
    <name type="ordered locus">XOO4417</name>
</gene>
<proteinExistence type="inferred from homology"/>
<evidence type="ECO:0000255" key="1">
    <source>
        <dbReference type="HAMAP-Rule" id="MF_00455"/>
    </source>
</evidence>
<evidence type="ECO:0000305" key="2"/>
<dbReference type="EC" id="5.3.1.5" evidence="1"/>
<dbReference type="EMBL" id="AE013598">
    <property type="protein sequence ID" value="AAW77671.1"/>
    <property type="status" value="ALT_INIT"/>
    <property type="molecule type" value="Genomic_DNA"/>
</dbReference>
<dbReference type="SMR" id="Q5GUF2"/>
<dbReference type="KEGG" id="xoo:XOO4417"/>
<dbReference type="HOGENOM" id="CLU_037261_1_0_6"/>
<dbReference type="Proteomes" id="UP000006735">
    <property type="component" value="Chromosome"/>
</dbReference>
<dbReference type="GO" id="GO:0005737">
    <property type="term" value="C:cytoplasm"/>
    <property type="evidence" value="ECO:0007669"/>
    <property type="project" value="UniProtKB-SubCell"/>
</dbReference>
<dbReference type="GO" id="GO:0000287">
    <property type="term" value="F:magnesium ion binding"/>
    <property type="evidence" value="ECO:0007669"/>
    <property type="project" value="UniProtKB-UniRule"/>
</dbReference>
<dbReference type="GO" id="GO:0009045">
    <property type="term" value="F:xylose isomerase activity"/>
    <property type="evidence" value="ECO:0007669"/>
    <property type="project" value="UniProtKB-UniRule"/>
</dbReference>
<dbReference type="GO" id="GO:0042732">
    <property type="term" value="P:D-xylose metabolic process"/>
    <property type="evidence" value="ECO:0007669"/>
    <property type="project" value="UniProtKB-UniRule"/>
</dbReference>
<dbReference type="FunFam" id="3.20.20.150:FF:000002">
    <property type="entry name" value="Xylose isomerase"/>
    <property type="match status" value="1"/>
</dbReference>
<dbReference type="Gene3D" id="3.20.20.150">
    <property type="entry name" value="Divalent-metal-dependent TIM barrel enzymes"/>
    <property type="match status" value="1"/>
</dbReference>
<dbReference type="HAMAP" id="MF_00455">
    <property type="entry name" value="Xylose_isom_A"/>
    <property type="match status" value="1"/>
</dbReference>
<dbReference type="InterPro" id="IPR036237">
    <property type="entry name" value="Xyl_isomerase-like_sf"/>
</dbReference>
<dbReference type="InterPro" id="IPR013452">
    <property type="entry name" value="Xylose_isom_bac"/>
</dbReference>
<dbReference type="InterPro" id="IPR001998">
    <property type="entry name" value="Xylose_isomerase"/>
</dbReference>
<dbReference type="NCBIfam" id="NF003998">
    <property type="entry name" value="PRK05474.1"/>
    <property type="match status" value="1"/>
</dbReference>
<dbReference type="NCBIfam" id="NF009115">
    <property type="entry name" value="PRK12465.1"/>
    <property type="match status" value="1"/>
</dbReference>
<dbReference type="NCBIfam" id="TIGR02630">
    <property type="entry name" value="xylose_isom_A"/>
    <property type="match status" value="1"/>
</dbReference>
<dbReference type="PANTHER" id="PTHR48408">
    <property type="match status" value="1"/>
</dbReference>
<dbReference type="PANTHER" id="PTHR48408:SF1">
    <property type="entry name" value="XYLOSE ISOMERASE"/>
    <property type="match status" value="1"/>
</dbReference>
<dbReference type="PRINTS" id="PR00688">
    <property type="entry name" value="XYLOSISMRASE"/>
</dbReference>
<dbReference type="SUPFAM" id="SSF51658">
    <property type="entry name" value="Xylose isomerase-like"/>
    <property type="match status" value="1"/>
</dbReference>
<dbReference type="PROSITE" id="PS51415">
    <property type="entry name" value="XYLOSE_ISOMERASE"/>
    <property type="match status" value="1"/>
</dbReference>
<accession>Q5GUF2</accession>
<keyword id="KW-0119">Carbohydrate metabolism</keyword>
<keyword id="KW-0963">Cytoplasm</keyword>
<keyword id="KW-0413">Isomerase</keyword>
<keyword id="KW-0460">Magnesium</keyword>
<keyword id="KW-0479">Metal-binding</keyword>
<keyword id="KW-1185">Reference proteome</keyword>
<keyword id="KW-0859">Xylose metabolism</keyword>
<protein>
    <recommendedName>
        <fullName evidence="1">Xylose isomerase 2</fullName>
        <ecNumber evidence="1">5.3.1.5</ecNumber>
    </recommendedName>
</protein>